<reference key="1">
    <citation type="journal article" date="2004" name="J. Gen. Virol.">
        <title>Genetic content of wild-type human cytomegalovirus.</title>
        <authorList>
            <person name="Dolan A."/>
            <person name="Cunningham C."/>
            <person name="Hector R.D."/>
            <person name="Hassan-Walker A.F."/>
            <person name="Lee L."/>
            <person name="Addison C."/>
            <person name="Dargan D.J."/>
            <person name="McGeoch D.J."/>
            <person name="Gatherer D."/>
            <person name="Emery V.C."/>
            <person name="Griffiths P.D."/>
            <person name="Sinzger C."/>
            <person name="McSharry B.P."/>
            <person name="Wilkinson G.W.G."/>
            <person name="Davison A.J."/>
        </authorList>
    </citation>
    <scope>NUCLEOTIDE SEQUENCE [LARGE SCALE GENOMIC DNA]</scope>
</reference>
<organism>
    <name type="scientific">Human cytomegalovirus (strain Merlin)</name>
    <name type="common">HHV-5</name>
    <name type="synonym">Human herpesvirus 5</name>
    <dbReference type="NCBI Taxonomy" id="295027"/>
    <lineage>
        <taxon>Viruses</taxon>
        <taxon>Duplodnaviria</taxon>
        <taxon>Heunggongvirae</taxon>
        <taxon>Peploviricota</taxon>
        <taxon>Herviviricetes</taxon>
        <taxon>Herpesvirales</taxon>
        <taxon>Orthoherpesviridae</taxon>
        <taxon>Betaherpesvirinae</taxon>
        <taxon>Cytomegalovirus</taxon>
        <taxon>Cytomegalovirus humanbeta5</taxon>
        <taxon>Human cytomegalovirus</taxon>
    </lineage>
</organism>
<accession>Q6SWB7</accession>
<accession>D2K3I3</accession>
<evidence type="ECO:0000255" key="1"/>
<evidence type="ECO:0000256" key="2">
    <source>
        <dbReference type="SAM" id="MobiDB-lite"/>
    </source>
</evidence>
<evidence type="ECO:0000305" key="3"/>
<sequence>MGGGRLPPLWLPLLIAWSEWGNCCLDAPPVVRSPCLQPVRDRNRERNPGSPQLLPYGDRLEVACIFPAHDWPEVSIRVHLCYWPEIVRSLVVDARSGQVLHNDASCYIAGGRWRFEDGGAAQRLSLSFRLITETAGTYTCVLGNETHSLATETTALVADVHDLRHSDRSCDLAFGSRSQTRYLWTPDPSRLRSINCGWEGERHRVVHYIPGTSGLLPSCEEDERELCVPFISQSIADNNCSRRHRVDGARRRYHLRRDYWLTDPKIGLLAAGSVALTSLCHLLCYWCSESYRRLNTEEENEAAEETAAGEASAVAAAAVSEEEQQRE</sequence>
<proteinExistence type="inferred from homology"/>
<gene>
    <name type="primary">UL14</name>
</gene>
<feature type="chain" id="PRO_0000417839" description="Uncharacterized protein UL14">
    <location>
        <begin position="1"/>
        <end position="327"/>
    </location>
</feature>
<feature type="transmembrane region" description="Helical" evidence="1">
    <location>
        <begin position="266"/>
        <end position="285"/>
    </location>
</feature>
<feature type="region of interest" description="Disordered" evidence="2">
    <location>
        <begin position="297"/>
        <end position="327"/>
    </location>
</feature>
<feature type="compositionally biased region" description="Low complexity" evidence="2">
    <location>
        <begin position="305"/>
        <end position="319"/>
    </location>
</feature>
<organismHost>
    <name type="scientific">Homo sapiens</name>
    <name type="common">Human</name>
    <dbReference type="NCBI Taxonomy" id="9606"/>
</organismHost>
<keyword id="KW-1043">Host membrane</keyword>
<keyword id="KW-0472">Membrane</keyword>
<keyword id="KW-1185">Reference proteome</keyword>
<keyword id="KW-0812">Transmembrane</keyword>
<keyword id="KW-1133">Transmembrane helix</keyword>
<dbReference type="EMBL" id="AY446894">
    <property type="protein sequence ID" value="AAR31579.1"/>
    <property type="molecule type" value="Genomic_DNA"/>
</dbReference>
<dbReference type="RefSeq" id="YP_081473.1">
    <property type="nucleotide sequence ID" value="NC_006273.2"/>
</dbReference>
<dbReference type="SMR" id="Q6SWB7"/>
<dbReference type="DNASU" id="3077543"/>
<dbReference type="GeneID" id="3077543"/>
<dbReference type="KEGG" id="vg:3077543"/>
<dbReference type="Reactome" id="R-HSA-9610379">
    <property type="pathway name" value="HCMV Late Events"/>
</dbReference>
<dbReference type="Proteomes" id="UP000000938">
    <property type="component" value="Segment"/>
</dbReference>
<dbReference type="GO" id="GO:0033644">
    <property type="term" value="C:host cell membrane"/>
    <property type="evidence" value="ECO:0007669"/>
    <property type="project" value="UniProtKB-SubCell"/>
</dbReference>
<dbReference type="GO" id="GO:0016020">
    <property type="term" value="C:membrane"/>
    <property type="evidence" value="ECO:0007669"/>
    <property type="project" value="UniProtKB-KW"/>
</dbReference>
<dbReference type="Gene3D" id="2.60.40.3790">
    <property type="match status" value="1"/>
</dbReference>
<dbReference type="InterPro" id="IPR031918">
    <property type="entry name" value="UL141"/>
</dbReference>
<dbReference type="InterPro" id="IPR038504">
    <property type="entry name" value="UL141-like_sf"/>
</dbReference>
<dbReference type="Pfam" id="PF16758">
    <property type="entry name" value="UL141"/>
    <property type="match status" value="1"/>
</dbReference>
<protein>
    <recommendedName>
        <fullName>Uncharacterized protein UL14</fullName>
    </recommendedName>
</protein>
<comment type="subcellular location">
    <subcellularLocation>
        <location evidence="3">Host membrane</location>
        <topology evidence="3">Single-pass membrane protein</topology>
    </subcellularLocation>
</comment>
<comment type="similarity">
    <text evidence="3">Belongs to the HHV-5 UL14 protein family.</text>
</comment>
<name>UL14_HCMVM</name>